<proteinExistence type="inferred from homology"/>
<evidence type="ECO:0000255" key="1">
    <source>
        <dbReference type="HAMAP-Rule" id="MF_00073"/>
    </source>
</evidence>
<gene>
    <name evidence="1" type="primary">nusB</name>
    <name type="ordered locus">SAB1397c</name>
</gene>
<organism>
    <name type="scientific">Staphylococcus aureus (strain bovine RF122 / ET3-1)</name>
    <dbReference type="NCBI Taxonomy" id="273036"/>
    <lineage>
        <taxon>Bacteria</taxon>
        <taxon>Bacillati</taxon>
        <taxon>Bacillota</taxon>
        <taxon>Bacilli</taxon>
        <taxon>Bacillales</taxon>
        <taxon>Staphylococcaceae</taxon>
        <taxon>Staphylococcus</taxon>
    </lineage>
</organism>
<reference key="1">
    <citation type="journal article" date="2007" name="PLoS ONE">
        <title>Molecular correlates of host specialization in Staphylococcus aureus.</title>
        <authorList>
            <person name="Herron-Olson L."/>
            <person name="Fitzgerald J.R."/>
            <person name="Musser J.M."/>
            <person name="Kapur V."/>
        </authorList>
    </citation>
    <scope>NUCLEOTIDE SEQUENCE [LARGE SCALE GENOMIC DNA]</scope>
    <source>
        <strain>bovine RF122 / ET3-1</strain>
    </source>
</reference>
<protein>
    <recommendedName>
        <fullName evidence="1">Transcription antitermination protein NusB</fullName>
    </recommendedName>
    <alternativeName>
        <fullName evidence="1">Antitermination factor NusB</fullName>
    </alternativeName>
</protein>
<name>NUSB_STAAB</name>
<feature type="chain" id="PRO_0000265597" description="Transcription antitermination protein NusB">
    <location>
        <begin position="1"/>
        <end position="129"/>
    </location>
</feature>
<sequence length="129" mass="15003">MSRKESRVQAFQTLFQLEMKDSDLTINEAISFIKDGNPDLDFEFIHWLVSGVKDHEPVLDETISPYLKDWTIARLLKTDRIILRMATYEILHSDTPAKVVMNEAVELTKQFSDDDHYKFINGVLSNIKK</sequence>
<keyword id="KW-0694">RNA-binding</keyword>
<keyword id="KW-0804">Transcription</keyword>
<keyword id="KW-0889">Transcription antitermination</keyword>
<keyword id="KW-0805">Transcription regulation</keyword>
<dbReference type="EMBL" id="AJ938182">
    <property type="protein sequence ID" value="CAI81086.1"/>
    <property type="molecule type" value="Genomic_DNA"/>
</dbReference>
<dbReference type="RefSeq" id="WP_000087390.1">
    <property type="nucleotide sequence ID" value="NC_007622.1"/>
</dbReference>
<dbReference type="SMR" id="Q2YYB7"/>
<dbReference type="KEGG" id="sab:SAB1397c"/>
<dbReference type="HOGENOM" id="CLU_087843_3_3_9"/>
<dbReference type="GO" id="GO:0005829">
    <property type="term" value="C:cytosol"/>
    <property type="evidence" value="ECO:0007669"/>
    <property type="project" value="TreeGrafter"/>
</dbReference>
<dbReference type="GO" id="GO:0003723">
    <property type="term" value="F:RNA binding"/>
    <property type="evidence" value="ECO:0007669"/>
    <property type="project" value="UniProtKB-UniRule"/>
</dbReference>
<dbReference type="GO" id="GO:0006353">
    <property type="term" value="P:DNA-templated transcription termination"/>
    <property type="evidence" value="ECO:0007669"/>
    <property type="project" value="UniProtKB-UniRule"/>
</dbReference>
<dbReference type="GO" id="GO:0031564">
    <property type="term" value="P:transcription antitermination"/>
    <property type="evidence" value="ECO:0007669"/>
    <property type="project" value="UniProtKB-KW"/>
</dbReference>
<dbReference type="FunFam" id="1.10.940.10:FF:000011">
    <property type="entry name" value="Transcription antitermination protein NusB"/>
    <property type="match status" value="1"/>
</dbReference>
<dbReference type="Gene3D" id="1.10.940.10">
    <property type="entry name" value="NusB-like"/>
    <property type="match status" value="1"/>
</dbReference>
<dbReference type="HAMAP" id="MF_00073">
    <property type="entry name" value="NusB"/>
    <property type="match status" value="1"/>
</dbReference>
<dbReference type="InterPro" id="IPR035926">
    <property type="entry name" value="NusB-like_sf"/>
</dbReference>
<dbReference type="InterPro" id="IPR011605">
    <property type="entry name" value="NusB_fam"/>
</dbReference>
<dbReference type="InterPro" id="IPR006027">
    <property type="entry name" value="NusB_RsmB_TIM44"/>
</dbReference>
<dbReference type="NCBIfam" id="TIGR01951">
    <property type="entry name" value="nusB"/>
    <property type="match status" value="1"/>
</dbReference>
<dbReference type="PANTHER" id="PTHR11078:SF3">
    <property type="entry name" value="ANTITERMINATION NUSB DOMAIN-CONTAINING PROTEIN"/>
    <property type="match status" value="1"/>
</dbReference>
<dbReference type="PANTHER" id="PTHR11078">
    <property type="entry name" value="N UTILIZATION SUBSTANCE PROTEIN B-RELATED"/>
    <property type="match status" value="1"/>
</dbReference>
<dbReference type="Pfam" id="PF01029">
    <property type="entry name" value="NusB"/>
    <property type="match status" value="1"/>
</dbReference>
<dbReference type="SUPFAM" id="SSF48013">
    <property type="entry name" value="NusB-like"/>
    <property type="match status" value="1"/>
</dbReference>
<accession>Q2YYB7</accession>
<comment type="function">
    <text evidence="1">Involved in transcription antitermination. Required for transcription of ribosomal RNA (rRNA) genes. Binds specifically to the boxA antiterminator sequence of the ribosomal RNA (rrn) operons.</text>
</comment>
<comment type="similarity">
    <text evidence="1">Belongs to the NusB family.</text>
</comment>